<proteinExistence type="inferred from homology"/>
<accession>Q6L398</accession>
<reference key="1">
    <citation type="journal article" date="2004" name="Curr. Genet.">
        <title>Structural features and transcript-editing analysis of sugarcane (Saccharum officinarum L.) chloroplast genome.</title>
        <authorList>
            <person name="Calsa T. Jr."/>
            <person name="Carraro D.M."/>
            <person name="Benatti M.R."/>
            <person name="Barbosa A.C."/>
            <person name="Kitajima J.P."/>
            <person name="Carrer H."/>
        </authorList>
    </citation>
    <scope>NUCLEOTIDE SEQUENCE [LARGE SCALE GENOMIC DNA]</scope>
    <source>
        <strain>cv. SP-80-3280</strain>
    </source>
</reference>
<dbReference type="EC" id="1.97.1.12" evidence="1"/>
<dbReference type="EMBL" id="AE009947">
    <property type="protein sequence ID" value="AAT44694.1"/>
    <property type="molecule type" value="Genomic_DNA"/>
</dbReference>
<dbReference type="SMR" id="Q6L398"/>
<dbReference type="GO" id="GO:0009535">
    <property type="term" value="C:chloroplast thylakoid membrane"/>
    <property type="evidence" value="ECO:0007669"/>
    <property type="project" value="UniProtKB-SubCell"/>
</dbReference>
<dbReference type="GO" id="GO:0009522">
    <property type="term" value="C:photosystem I"/>
    <property type="evidence" value="ECO:0007669"/>
    <property type="project" value="UniProtKB-KW"/>
</dbReference>
<dbReference type="GO" id="GO:0051539">
    <property type="term" value="F:4 iron, 4 sulfur cluster binding"/>
    <property type="evidence" value="ECO:0007669"/>
    <property type="project" value="UniProtKB-KW"/>
</dbReference>
<dbReference type="GO" id="GO:0016168">
    <property type="term" value="F:chlorophyll binding"/>
    <property type="evidence" value="ECO:0007669"/>
    <property type="project" value="UniProtKB-KW"/>
</dbReference>
<dbReference type="GO" id="GO:0009055">
    <property type="term" value="F:electron transfer activity"/>
    <property type="evidence" value="ECO:0007669"/>
    <property type="project" value="UniProtKB-UniRule"/>
</dbReference>
<dbReference type="GO" id="GO:0000287">
    <property type="term" value="F:magnesium ion binding"/>
    <property type="evidence" value="ECO:0007669"/>
    <property type="project" value="UniProtKB-UniRule"/>
</dbReference>
<dbReference type="GO" id="GO:0016491">
    <property type="term" value="F:oxidoreductase activity"/>
    <property type="evidence" value="ECO:0007669"/>
    <property type="project" value="UniProtKB-KW"/>
</dbReference>
<dbReference type="GO" id="GO:0015979">
    <property type="term" value="P:photosynthesis"/>
    <property type="evidence" value="ECO:0007669"/>
    <property type="project" value="UniProtKB-UniRule"/>
</dbReference>
<dbReference type="FunFam" id="1.20.1130.10:FF:000001">
    <property type="entry name" value="Photosystem I P700 chlorophyll a apoprotein A2"/>
    <property type="match status" value="1"/>
</dbReference>
<dbReference type="Gene3D" id="1.20.1130.10">
    <property type="entry name" value="Photosystem I PsaA/PsaB"/>
    <property type="match status" value="1"/>
</dbReference>
<dbReference type="HAMAP" id="MF_00458">
    <property type="entry name" value="PSI_PsaA"/>
    <property type="match status" value="1"/>
</dbReference>
<dbReference type="InterPro" id="IPR006243">
    <property type="entry name" value="PSI_PsaA"/>
</dbReference>
<dbReference type="InterPro" id="IPR001280">
    <property type="entry name" value="PSI_PsaA/B"/>
</dbReference>
<dbReference type="InterPro" id="IPR020586">
    <property type="entry name" value="PSI_PsaA/B_CS"/>
</dbReference>
<dbReference type="InterPro" id="IPR036408">
    <property type="entry name" value="PSI_PsaA/B_sf"/>
</dbReference>
<dbReference type="NCBIfam" id="TIGR01335">
    <property type="entry name" value="psaA"/>
    <property type="match status" value="1"/>
</dbReference>
<dbReference type="PANTHER" id="PTHR30128">
    <property type="entry name" value="OUTER MEMBRANE PROTEIN, OMPA-RELATED"/>
    <property type="match status" value="1"/>
</dbReference>
<dbReference type="PANTHER" id="PTHR30128:SF19">
    <property type="entry name" value="PHOTOSYSTEM I P700 CHLOROPHYLL A APOPROTEIN A1-RELATED"/>
    <property type="match status" value="1"/>
</dbReference>
<dbReference type="Pfam" id="PF00223">
    <property type="entry name" value="PsaA_PsaB"/>
    <property type="match status" value="1"/>
</dbReference>
<dbReference type="PIRSF" id="PIRSF002905">
    <property type="entry name" value="PSI_A"/>
    <property type="match status" value="1"/>
</dbReference>
<dbReference type="PRINTS" id="PR00257">
    <property type="entry name" value="PHOTSYSPSAAB"/>
</dbReference>
<dbReference type="SUPFAM" id="SSF81558">
    <property type="entry name" value="Photosystem I subunits PsaA/PsaB"/>
    <property type="match status" value="1"/>
</dbReference>
<dbReference type="PROSITE" id="PS00419">
    <property type="entry name" value="PHOTOSYSTEM_I_PSAAB"/>
    <property type="match status" value="1"/>
</dbReference>
<gene>
    <name evidence="1" type="primary">psaA</name>
    <name type="ordered locus">PS117</name>
</gene>
<protein>
    <recommendedName>
        <fullName evidence="1">Photosystem I P700 chlorophyll a apoprotein A1</fullName>
        <ecNumber evidence="1">1.97.1.12</ecNumber>
    </recommendedName>
    <alternativeName>
        <fullName evidence="1">PSI-A</fullName>
    </alternativeName>
    <alternativeName>
        <fullName evidence="1">PsaA</fullName>
    </alternativeName>
</protein>
<name>PSAA_SACHY</name>
<organism>
    <name type="scientific">Saccharum hybrid</name>
    <name type="common">Sugarcane</name>
    <dbReference type="NCBI Taxonomy" id="15819"/>
    <lineage>
        <taxon>Eukaryota</taxon>
        <taxon>Viridiplantae</taxon>
        <taxon>Streptophyta</taxon>
        <taxon>Embryophyta</taxon>
        <taxon>Tracheophyta</taxon>
        <taxon>Spermatophyta</taxon>
        <taxon>Magnoliopsida</taxon>
        <taxon>Liliopsida</taxon>
        <taxon>Poales</taxon>
        <taxon>Poaceae</taxon>
        <taxon>PACMAD clade</taxon>
        <taxon>Panicoideae</taxon>
        <taxon>Andropogonodae</taxon>
        <taxon>Andropogoneae</taxon>
        <taxon>Saccharinae</taxon>
        <taxon>Saccharum</taxon>
    </lineage>
</organism>
<sequence>MIIRPSEPEVKIAVDRDPVKTSFEEWARPGHFSRTIAKGPDTTTWIWNLHADAHDFDSHTGDLEEISRKVFSAHFGQLSIIFLWLSGMYFHGARFSNYEAWLSDPTHIGPSAQVVWPIVGQEILNGDVGGGFRGIQITSGFFQIWRASGITSELQLYCTAIGALIFASLMLFAGWFHYHKAAPKLAWFQDVESMLNHHLAGLLGLGSLSWAGHQIHVSLPINQFLDAGVDPKEIPLPHEFILNRDLLAQLYPSFAEGATPFFTLNWSKYAEFLSFRGGLDPITGGLWLSDIAHHHLAIAILFLIAGHMYRTNWGIGHGLKDILEAHKGPFTGQGHKGLYEILTTSWHAQLSLNLAMLGSTTIVVAHHMYSMPPYPYLATDYGTQLSLFTHHMWIGGFLIVGAAAHAAIFMVRDYDPTTRYNDLLDRVLRHRDAIISHLNWVCIFLGFHSFGLYIHNDTMSALGRPQDMFSDTAIQLQPIFAQWIQNIHAGAPGVTAPGATTSTSLTWGGGELVAVGGKVALLPIPLGTADFLVHHIHAFTIHVTVLILLKGVLFARSSRLIPDKANLGFRFPCDGPGRGGTCQVSAWDHVFLGLFWMYNSISVVIFHFSWKMQSDVWGTISDQGIVTHITGGNFAQSSITINGWLRDFLWAQASQVIQSYGSSLSAYGLFFLGAHFVWAFSLMFLFSGRGYWQELIESIVWAHNKLKVAPATQPRALSIIQGRAVGVTHYLLGGIATTWAFFLARIIAVG</sequence>
<feature type="chain" id="PRO_0000088574" description="Photosystem I P700 chlorophyll a apoprotein A1">
    <location>
        <begin position="1"/>
        <end position="750"/>
    </location>
</feature>
<feature type="transmembrane region" description="Helical; Name=I" evidence="1">
    <location>
        <begin position="70"/>
        <end position="93"/>
    </location>
</feature>
<feature type="transmembrane region" description="Helical; Name=II" evidence="1">
    <location>
        <begin position="156"/>
        <end position="179"/>
    </location>
</feature>
<feature type="transmembrane region" description="Helical; Name=III" evidence="1">
    <location>
        <begin position="195"/>
        <end position="219"/>
    </location>
</feature>
<feature type="transmembrane region" description="Helical; Name=IV" evidence="1">
    <location>
        <begin position="291"/>
        <end position="309"/>
    </location>
</feature>
<feature type="transmembrane region" description="Helical; Name=V" evidence="1">
    <location>
        <begin position="346"/>
        <end position="369"/>
    </location>
</feature>
<feature type="transmembrane region" description="Helical; Name=VI" evidence="1">
    <location>
        <begin position="385"/>
        <end position="411"/>
    </location>
</feature>
<feature type="transmembrane region" description="Helical; Name=VII" evidence="1">
    <location>
        <begin position="433"/>
        <end position="455"/>
    </location>
</feature>
<feature type="transmembrane region" description="Helical; Name=VIII" evidence="1">
    <location>
        <begin position="531"/>
        <end position="549"/>
    </location>
</feature>
<feature type="transmembrane region" description="Helical; Name=IX" evidence="1">
    <location>
        <begin position="589"/>
        <end position="610"/>
    </location>
</feature>
<feature type="transmembrane region" description="Helical; Name=X" evidence="1">
    <location>
        <begin position="664"/>
        <end position="686"/>
    </location>
</feature>
<feature type="transmembrane region" description="Helical; Name=XI" evidence="1">
    <location>
        <begin position="724"/>
        <end position="744"/>
    </location>
</feature>
<feature type="binding site" evidence="1">
    <location>
        <position position="573"/>
    </location>
    <ligand>
        <name>[4Fe-4S] cluster</name>
        <dbReference type="ChEBI" id="CHEBI:49883"/>
        <note>ligand shared between dimeric partners</note>
    </ligand>
</feature>
<feature type="binding site" evidence="1">
    <location>
        <position position="582"/>
    </location>
    <ligand>
        <name>[4Fe-4S] cluster</name>
        <dbReference type="ChEBI" id="CHEBI:49883"/>
        <note>ligand shared between dimeric partners</note>
    </ligand>
</feature>
<feature type="binding site" description="axial binding residue" evidence="1">
    <location>
        <position position="675"/>
    </location>
    <ligand>
        <name>chlorophyll a'</name>
        <dbReference type="ChEBI" id="CHEBI:189419"/>
        <label>A1</label>
    </ligand>
    <ligandPart>
        <name>Mg</name>
        <dbReference type="ChEBI" id="CHEBI:25107"/>
    </ligandPart>
</feature>
<feature type="binding site" description="axial binding residue" evidence="1">
    <location>
        <position position="683"/>
    </location>
    <ligand>
        <name>chlorophyll a</name>
        <dbReference type="ChEBI" id="CHEBI:58416"/>
        <label>A3</label>
    </ligand>
    <ligandPart>
        <name>Mg</name>
        <dbReference type="ChEBI" id="CHEBI:25107"/>
    </ligandPart>
</feature>
<feature type="binding site" evidence="1">
    <location>
        <position position="691"/>
    </location>
    <ligand>
        <name>chlorophyll a</name>
        <dbReference type="ChEBI" id="CHEBI:58416"/>
        <label>A3</label>
    </ligand>
</feature>
<feature type="binding site" evidence="1">
    <location>
        <position position="692"/>
    </location>
    <ligand>
        <name>phylloquinone</name>
        <dbReference type="ChEBI" id="CHEBI:18067"/>
        <label>A</label>
    </ligand>
</feature>
<comment type="function">
    <text>PsaA and PsaB bind P700, the primary electron donor of photosystem I (PSI), as well as the electron acceptors A0, A1 and FX. PSI is a plastocyanin-ferredoxin oxidoreductase, converting photonic excitation into a charge separation, which transfers an electron from the donor P700 chlorophyll pair to the spectroscopically characterized acceptors A0, A1, FX, FA and FB in turn. Oxidized P700 is reduced on the lumenal side of the thylakoid membrane by plastocyanin.</text>
</comment>
<comment type="catalytic activity">
    <reaction evidence="1">
        <text>reduced [plastocyanin] + hnu + oxidized [2Fe-2S]-[ferredoxin] = oxidized [plastocyanin] + reduced [2Fe-2S]-[ferredoxin]</text>
        <dbReference type="Rhea" id="RHEA:30407"/>
        <dbReference type="Rhea" id="RHEA-COMP:10000"/>
        <dbReference type="Rhea" id="RHEA-COMP:10001"/>
        <dbReference type="Rhea" id="RHEA-COMP:10039"/>
        <dbReference type="Rhea" id="RHEA-COMP:10040"/>
        <dbReference type="ChEBI" id="CHEBI:29036"/>
        <dbReference type="ChEBI" id="CHEBI:30212"/>
        <dbReference type="ChEBI" id="CHEBI:33737"/>
        <dbReference type="ChEBI" id="CHEBI:33738"/>
        <dbReference type="ChEBI" id="CHEBI:49552"/>
        <dbReference type="EC" id="1.97.1.12"/>
    </reaction>
</comment>
<comment type="cofactor">
    <text evidence="1">P700 is a chlorophyll a/chlorophyll a' dimer, A0 is one or more chlorophyll a, A1 is one or both phylloquinones and FX is a shared 4Fe-4S iron-sulfur center.</text>
</comment>
<comment type="subunit">
    <text evidence="1">The PsaA/B heterodimer binds the P700 chlorophyll special pair and subsequent electron acceptors. PSI consists of a core antenna complex that captures photons, and an electron transfer chain that converts photonic excitation into a charge separation. The eukaryotic PSI reaction center is composed of at least 11 subunits.</text>
</comment>
<comment type="subcellular location">
    <subcellularLocation>
        <location evidence="1">Plastid</location>
        <location evidence="1">Chloroplast thylakoid membrane</location>
        <topology evidence="1">Multi-pass membrane protein</topology>
    </subcellularLocation>
</comment>
<comment type="similarity">
    <text evidence="1">Belongs to the PsaA/PsaB family.</text>
</comment>
<geneLocation type="chloroplast"/>
<keyword id="KW-0004">4Fe-4S</keyword>
<keyword id="KW-0148">Chlorophyll</keyword>
<keyword id="KW-0150">Chloroplast</keyword>
<keyword id="KW-0157">Chromophore</keyword>
<keyword id="KW-0249">Electron transport</keyword>
<keyword id="KW-0408">Iron</keyword>
<keyword id="KW-0411">Iron-sulfur</keyword>
<keyword id="KW-0460">Magnesium</keyword>
<keyword id="KW-0472">Membrane</keyword>
<keyword id="KW-0479">Metal-binding</keyword>
<keyword id="KW-0560">Oxidoreductase</keyword>
<keyword id="KW-0602">Photosynthesis</keyword>
<keyword id="KW-0603">Photosystem I</keyword>
<keyword id="KW-0934">Plastid</keyword>
<keyword id="KW-0793">Thylakoid</keyword>
<keyword id="KW-0812">Transmembrane</keyword>
<keyword id="KW-1133">Transmembrane helix</keyword>
<keyword id="KW-0813">Transport</keyword>
<evidence type="ECO:0000255" key="1">
    <source>
        <dbReference type="HAMAP-Rule" id="MF_00458"/>
    </source>
</evidence>